<comment type="similarity">
    <text evidence="2">Belongs to the SOWAH family.</text>
</comment>
<accession>A6NJG2</accession>
<proteinExistence type="evidence at protein level"/>
<keyword id="KW-0040">ANK repeat</keyword>
<keyword id="KW-1267">Proteomics identification</keyword>
<keyword id="KW-1185">Reference proteome</keyword>
<keyword id="KW-0677">Repeat</keyword>
<feature type="chain" id="PRO_0000315705" description="Ankyrin repeat domain-containing protein SOWAHD">
    <location>
        <begin position="1"/>
        <end position="315"/>
    </location>
</feature>
<feature type="repeat" description="ANK 1">
    <location>
        <begin position="112"/>
        <end position="141"/>
    </location>
</feature>
<feature type="repeat" description="ANK 2">
    <location>
        <begin position="147"/>
        <end position="162"/>
    </location>
</feature>
<feature type="repeat" description="ANK 3">
    <location>
        <begin position="186"/>
        <end position="216"/>
    </location>
</feature>
<feature type="region of interest" description="Disordered" evidence="1">
    <location>
        <begin position="1"/>
        <end position="39"/>
    </location>
</feature>
<feature type="sequence variant" id="VAR_061019" description="In dbSNP:rs12841259.">
    <original>T</original>
    <variation>A</variation>
    <location>
        <position position="254"/>
    </location>
</feature>
<evidence type="ECO:0000256" key="1">
    <source>
        <dbReference type="SAM" id="MobiDB-lite"/>
    </source>
</evidence>
<evidence type="ECO:0000305" key="2"/>
<dbReference type="EMBL" id="CR593492">
    <property type="status" value="NOT_ANNOTATED_CDS"/>
    <property type="molecule type" value="mRNA"/>
</dbReference>
<dbReference type="EMBL" id="AC005052">
    <property type="status" value="NOT_ANNOTATED_CDS"/>
    <property type="molecule type" value="Genomic_DNA"/>
</dbReference>
<dbReference type="CCDS" id="CCDS43984.1"/>
<dbReference type="RefSeq" id="NP_001099046.1">
    <property type="nucleotide sequence ID" value="NM_001105576.3"/>
</dbReference>
<dbReference type="SMR" id="A6NJG2"/>
<dbReference type="FunCoup" id="A6NJG2">
    <property type="interactions" value="31"/>
</dbReference>
<dbReference type="IntAct" id="A6NJG2">
    <property type="interactions" value="1"/>
</dbReference>
<dbReference type="MINT" id="A6NJG2"/>
<dbReference type="STRING" id="9606.ENSP00000340975"/>
<dbReference type="iPTMnet" id="A6NJG2"/>
<dbReference type="PhosphoSitePlus" id="A6NJG2"/>
<dbReference type="BioMuta" id="SOWAHD"/>
<dbReference type="jPOST" id="A6NJG2"/>
<dbReference type="MassIVE" id="A6NJG2"/>
<dbReference type="PaxDb" id="9606-ENSP00000340975"/>
<dbReference type="PeptideAtlas" id="A6NJG2"/>
<dbReference type="ProteomicsDB" id="1333"/>
<dbReference type="Antibodypedia" id="56549">
    <property type="antibodies" value="71 antibodies from 14 providers"/>
</dbReference>
<dbReference type="DNASU" id="347454"/>
<dbReference type="Ensembl" id="ENST00000343905.5">
    <property type="protein sequence ID" value="ENSP00000340975.3"/>
    <property type="gene ID" value="ENSG00000187808.5"/>
</dbReference>
<dbReference type="GeneID" id="347454"/>
<dbReference type="KEGG" id="hsa:347454"/>
<dbReference type="MANE-Select" id="ENST00000343905.5">
    <property type="protein sequence ID" value="ENSP00000340975.3"/>
    <property type="RefSeq nucleotide sequence ID" value="NM_001105576.3"/>
    <property type="RefSeq protein sequence ID" value="NP_001099046.1"/>
</dbReference>
<dbReference type="UCSC" id="uc010nql.4">
    <property type="organism name" value="human"/>
</dbReference>
<dbReference type="AGR" id="HGNC:32960"/>
<dbReference type="CTD" id="347454"/>
<dbReference type="DisGeNET" id="347454"/>
<dbReference type="GeneCards" id="SOWAHD"/>
<dbReference type="HGNC" id="HGNC:32960">
    <property type="gene designation" value="SOWAHD"/>
</dbReference>
<dbReference type="HPA" id="ENSG00000187808">
    <property type="expression patterns" value="Tissue enhanced (intestine, lymphoid tissue, testis)"/>
</dbReference>
<dbReference type="neXtProt" id="NX_A6NJG2"/>
<dbReference type="OpenTargets" id="ENSG00000187808"/>
<dbReference type="PharmGKB" id="PA145149865"/>
<dbReference type="VEuPathDB" id="HostDB:ENSG00000187808"/>
<dbReference type="eggNOG" id="ENOG502QPPI">
    <property type="taxonomic scope" value="Eukaryota"/>
</dbReference>
<dbReference type="GeneTree" id="ENSGT00950000183003"/>
<dbReference type="HOGENOM" id="CLU_083908_0_0_1"/>
<dbReference type="InParanoid" id="A6NJG2"/>
<dbReference type="OMA" id="HMFPFFQ"/>
<dbReference type="OrthoDB" id="60433at2759"/>
<dbReference type="PAN-GO" id="A6NJG2">
    <property type="GO annotations" value="0 GO annotations based on evolutionary models"/>
</dbReference>
<dbReference type="PhylomeDB" id="A6NJG2"/>
<dbReference type="TreeFam" id="TF331362"/>
<dbReference type="PathwayCommons" id="A6NJG2"/>
<dbReference type="SignaLink" id="A6NJG2"/>
<dbReference type="BioGRID-ORCS" id="347454">
    <property type="hits" value="5 hits in 766 CRISPR screens"/>
</dbReference>
<dbReference type="GenomeRNAi" id="347454"/>
<dbReference type="Pharos" id="A6NJG2">
    <property type="development level" value="Tdark"/>
</dbReference>
<dbReference type="PRO" id="PR:A6NJG2"/>
<dbReference type="Proteomes" id="UP000005640">
    <property type="component" value="Chromosome X"/>
</dbReference>
<dbReference type="RNAct" id="A6NJG2">
    <property type="molecule type" value="protein"/>
</dbReference>
<dbReference type="Bgee" id="ENSG00000187808">
    <property type="expression patterns" value="Expressed in granulocyte and 82 other cell types or tissues"/>
</dbReference>
<dbReference type="Gene3D" id="1.25.40.20">
    <property type="entry name" value="Ankyrin repeat-containing domain"/>
    <property type="match status" value="1"/>
</dbReference>
<dbReference type="InterPro" id="IPR002110">
    <property type="entry name" value="Ankyrin_rpt"/>
</dbReference>
<dbReference type="InterPro" id="IPR036770">
    <property type="entry name" value="Ankyrin_rpt-contain_sf"/>
</dbReference>
<dbReference type="PANTHER" id="PTHR14491:SF8">
    <property type="entry name" value="ANKYRIN REPEAT DOMAIN-CONTAINING PROTEIN SOWAHD"/>
    <property type="match status" value="1"/>
</dbReference>
<dbReference type="PANTHER" id="PTHR14491">
    <property type="entry name" value="SOSONDOWAH, ISOFORM G"/>
    <property type="match status" value="1"/>
</dbReference>
<dbReference type="Pfam" id="PF12796">
    <property type="entry name" value="Ank_2"/>
    <property type="match status" value="1"/>
</dbReference>
<dbReference type="SMART" id="SM00248">
    <property type="entry name" value="ANK"/>
    <property type="match status" value="3"/>
</dbReference>
<dbReference type="SUPFAM" id="SSF48403">
    <property type="entry name" value="Ankyrin repeat"/>
    <property type="match status" value="1"/>
</dbReference>
<dbReference type="PROSITE" id="PS50297">
    <property type="entry name" value="ANK_REP_REGION"/>
    <property type="match status" value="1"/>
</dbReference>
<dbReference type="PROSITE" id="PS50088">
    <property type="entry name" value="ANK_REPEAT"/>
    <property type="match status" value="1"/>
</dbReference>
<name>SWAHD_HUMAN</name>
<organism>
    <name type="scientific">Homo sapiens</name>
    <name type="common">Human</name>
    <dbReference type="NCBI Taxonomy" id="9606"/>
    <lineage>
        <taxon>Eukaryota</taxon>
        <taxon>Metazoa</taxon>
        <taxon>Chordata</taxon>
        <taxon>Craniata</taxon>
        <taxon>Vertebrata</taxon>
        <taxon>Euteleostomi</taxon>
        <taxon>Mammalia</taxon>
        <taxon>Eutheria</taxon>
        <taxon>Euarchontoglires</taxon>
        <taxon>Primates</taxon>
        <taxon>Haplorrhini</taxon>
        <taxon>Catarrhini</taxon>
        <taxon>Hominidae</taxon>
        <taxon>Homo</taxon>
    </lineage>
</organism>
<gene>
    <name type="primary">SOWAHD</name>
    <name type="synonym">ANKRD58</name>
</gene>
<reference key="1">
    <citation type="submission" date="2004-07" db="EMBL/GenBank/DDBJ databases">
        <title>Full-length cDNA libraries and normalization.</title>
        <authorList>
            <person name="Li W.B."/>
            <person name="Gruber C."/>
            <person name="Jessee J."/>
            <person name="Polayes D."/>
        </authorList>
    </citation>
    <scope>NUCLEOTIDE SEQUENCE [LARGE SCALE MRNA]</scope>
    <source>
        <tissue>Placenta</tissue>
    </source>
</reference>
<reference key="2">
    <citation type="journal article" date="2005" name="Nature">
        <title>The DNA sequence of the human X chromosome.</title>
        <authorList>
            <person name="Ross M.T."/>
            <person name="Grafham D.V."/>
            <person name="Coffey A.J."/>
            <person name="Scherer S."/>
            <person name="McLay K."/>
            <person name="Muzny D."/>
            <person name="Platzer M."/>
            <person name="Howell G.R."/>
            <person name="Burrows C."/>
            <person name="Bird C.P."/>
            <person name="Frankish A."/>
            <person name="Lovell F.L."/>
            <person name="Howe K.L."/>
            <person name="Ashurst J.L."/>
            <person name="Fulton R.S."/>
            <person name="Sudbrak R."/>
            <person name="Wen G."/>
            <person name="Jones M.C."/>
            <person name="Hurles M.E."/>
            <person name="Andrews T.D."/>
            <person name="Scott C.E."/>
            <person name="Searle S."/>
            <person name="Ramser J."/>
            <person name="Whittaker A."/>
            <person name="Deadman R."/>
            <person name="Carter N.P."/>
            <person name="Hunt S.E."/>
            <person name="Chen R."/>
            <person name="Cree A."/>
            <person name="Gunaratne P."/>
            <person name="Havlak P."/>
            <person name="Hodgson A."/>
            <person name="Metzker M.L."/>
            <person name="Richards S."/>
            <person name="Scott G."/>
            <person name="Steffen D."/>
            <person name="Sodergren E."/>
            <person name="Wheeler D.A."/>
            <person name="Worley K.C."/>
            <person name="Ainscough R."/>
            <person name="Ambrose K.D."/>
            <person name="Ansari-Lari M.A."/>
            <person name="Aradhya S."/>
            <person name="Ashwell R.I."/>
            <person name="Babbage A.K."/>
            <person name="Bagguley C.L."/>
            <person name="Ballabio A."/>
            <person name="Banerjee R."/>
            <person name="Barker G.E."/>
            <person name="Barlow K.F."/>
            <person name="Barrett I.P."/>
            <person name="Bates K.N."/>
            <person name="Beare D.M."/>
            <person name="Beasley H."/>
            <person name="Beasley O."/>
            <person name="Beck A."/>
            <person name="Bethel G."/>
            <person name="Blechschmidt K."/>
            <person name="Brady N."/>
            <person name="Bray-Allen S."/>
            <person name="Bridgeman A.M."/>
            <person name="Brown A.J."/>
            <person name="Brown M.J."/>
            <person name="Bonnin D."/>
            <person name="Bruford E.A."/>
            <person name="Buhay C."/>
            <person name="Burch P."/>
            <person name="Burford D."/>
            <person name="Burgess J."/>
            <person name="Burrill W."/>
            <person name="Burton J."/>
            <person name="Bye J.M."/>
            <person name="Carder C."/>
            <person name="Carrel L."/>
            <person name="Chako J."/>
            <person name="Chapman J.C."/>
            <person name="Chavez D."/>
            <person name="Chen E."/>
            <person name="Chen G."/>
            <person name="Chen Y."/>
            <person name="Chen Z."/>
            <person name="Chinault C."/>
            <person name="Ciccodicola A."/>
            <person name="Clark S.Y."/>
            <person name="Clarke G."/>
            <person name="Clee C.M."/>
            <person name="Clegg S."/>
            <person name="Clerc-Blankenburg K."/>
            <person name="Clifford K."/>
            <person name="Cobley V."/>
            <person name="Cole C.G."/>
            <person name="Conquer J.S."/>
            <person name="Corby N."/>
            <person name="Connor R.E."/>
            <person name="David R."/>
            <person name="Davies J."/>
            <person name="Davis C."/>
            <person name="Davis J."/>
            <person name="Delgado O."/>
            <person name="Deshazo D."/>
            <person name="Dhami P."/>
            <person name="Ding Y."/>
            <person name="Dinh H."/>
            <person name="Dodsworth S."/>
            <person name="Draper H."/>
            <person name="Dugan-Rocha S."/>
            <person name="Dunham A."/>
            <person name="Dunn M."/>
            <person name="Durbin K.J."/>
            <person name="Dutta I."/>
            <person name="Eades T."/>
            <person name="Ellwood M."/>
            <person name="Emery-Cohen A."/>
            <person name="Errington H."/>
            <person name="Evans K.L."/>
            <person name="Faulkner L."/>
            <person name="Francis F."/>
            <person name="Frankland J."/>
            <person name="Fraser A.E."/>
            <person name="Galgoczy P."/>
            <person name="Gilbert J."/>
            <person name="Gill R."/>
            <person name="Gloeckner G."/>
            <person name="Gregory S.G."/>
            <person name="Gribble S."/>
            <person name="Griffiths C."/>
            <person name="Grocock R."/>
            <person name="Gu Y."/>
            <person name="Gwilliam R."/>
            <person name="Hamilton C."/>
            <person name="Hart E.A."/>
            <person name="Hawes A."/>
            <person name="Heath P.D."/>
            <person name="Heitmann K."/>
            <person name="Hennig S."/>
            <person name="Hernandez J."/>
            <person name="Hinzmann B."/>
            <person name="Ho S."/>
            <person name="Hoffs M."/>
            <person name="Howden P.J."/>
            <person name="Huckle E.J."/>
            <person name="Hume J."/>
            <person name="Hunt P.J."/>
            <person name="Hunt A.R."/>
            <person name="Isherwood J."/>
            <person name="Jacob L."/>
            <person name="Johnson D."/>
            <person name="Jones S."/>
            <person name="de Jong P.J."/>
            <person name="Joseph S.S."/>
            <person name="Keenan S."/>
            <person name="Kelly S."/>
            <person name="Kershaw J.K."/>
            <person name="Khan Z."/>
            <person name="Kioschis P."/>
            <person name="Klages S."/>
            <person name="Knights A.J."/>
            <person name="Kosiura A."/>
            <person name="Kovar-Smith C."/>
            <person name="Laird G.K."/>
            <person name="Langford C."/>
            <person name="Lawlor S."/>
            <person name="Leversha M."/>
            <person name="Lewis L."/>
            <person name="Liu W."/>
            <person name="Lloyd C."/>
            <person name="Lloyd D.M."/>
            <person name="Loulseged H."/>
            <person name="Loveland J.E."/>
            <person name="Lovell J.D."/>
            <person name="Lozado R."/>
            <person name="Lu J."/>
            <person name="Lyne R."/>
            <person name="Ma J."/>
            <person name="Maheshwari M."/>
            <person name="Matthews L.H."/>
            <person name="McDowall J."/>
            <person name="McLaren S."/>
            <person name="McMurray A."/>
            <person name="Meidl P."/>
            <person name="Meitinger T."/>
            <person name="Milne S."/>
            <person name="Miner G."/>
            <person name="Mistry S.L."/>
            <person name="Morgan M."/>
            <person name="Morris S."/>
            <person name="Mueller I."/>
            <person name="Mullikin J.C."/>
            <person name="Nguyen N."/>
            <person name="Nordsiek G."/>
            <person name="Nyakatura G."/>
            <person name="O'dell C.N."/>
            <person name="Okwuonu G."/>
            <person name="Palmer S."/>
            <person name="Pandian R."/>
            <person name="Parker D."/>
            <person name="Parrish J."/>
            <person name="Pasternak S."/>
            <person name="Patel D."/>
            <person name="Pearce A.V."/>
            <person name="Pearson D.M."/>
            <person name="Pelan S.E."/>
            <person name="Perez L."/>
            <person name="Porter K.M."/>
            <person name="Ramsey Y."/>
            <person name="Reichwald K."/>
            <person name="Rhodes S."/>
            <person name="Ridler K.A."/>
            <person name="Schlessinger D."/>
            <person name="Schueler M.G."/>
            <person name="Sehra H.K."/>
            <person name="Shaw-Smith C."/>
            <person name="Shen H."/>
            <person name="Sheridan E.M."/>
            <person name="Shownkeen R."/>
            <person name="Skuce C.D."/>
            <person name="Smith M.L."/>
            <person name="Sotheran E.C."/>
            <person name="Steingruber H.E."/>
            <person name="Steward C.A."/>
            <person name="Storey R."/>
            <person name="Swann R.M."/>
            <person name="Swarbreck D."/>
            <person name="Tabor P.E."/>
            <person name="Taudien S."/>
            <person name="Taylor T."/>
            <person name="Teague B."/>
            <person name="Thomas K."/>
            <person name="Thorpe A."/>
            <person name="Timms K."/>
            <person name="Tracey A."/>
            <person name="Trevanion S."/>
            <person name="Tromans A.C."/>
            <person name="d'Urso M."/>
            <person name="Verduzco D."/>
            <person name="Villasana D."/>
            <person name="Waldron L."/>
            <person name="Wall M."/>
            <person name="Wang Q."/>
            <person name="Warren J."/>
            <person name="Warry G.L."/>
            <person name="Wei X."/>
            <person name="West A."/>
            <person name="Whitehead S.L."/>
            <person name="Whiteley M.N."/>
            <person name="Wilkinson J.E."/>
            <person name="Willey D.L."/>
            <person name="Williams G."/>
            <person name="Williams L."/>
            <person name="Williamson A."/>
            <person name="Williamson H."/>
            <person name="Wilming L."/>
            <person name="Woodmansey R.L."/>
            <person name="Wray P.W."/>
            <person name="Yen J."/>
            <person name="Zhang J."/>
            <person name="Zhou J."/>
            <person name="Zoghbi H."/>
            <person name="Zorilla S."/>
            <person name="Buck D."/>
            <person name="Reinhardt R."/>
            <person name="Poustka A."/>
            <person name="Rosenthal A."/>
            <person name="Lehrach H."/>
            <person name="Meindl A."/>
            <person name="Minx P.J."/>
            <person name="Hillier L.W."/>
            <person name="Willard H.F."/>
            <person name="Wilson R.K."/>
            <person name="Waterston R.H."/>
            <person name="Rice C.M."/>
            <person name="Vaudin M."/>
            <person name="Coulson A."/>
            <person name="Nelson D.L."/>
            <person name="Weinstock G."/>
            <person name="Sulston J.E."/>
            <person name="Durbin R.M."/>
            <person name="Hubbard T."/>
            <person name="Gibbs R.A."/>
            <person name="Beck S."/>
            <person name="Rogers J."/>
            <person name="Bentley D.R."/>
        </authorList>
    </citation>
    <scope>NUCLEOTIDE SEQUENCE [LARGE SCALE GENOMIC DNA]</scope>
</reference>
<protein>
    <recommendedName>
        <fullName>Ankyrin repeat domain-containing protein SOWAHD</fullName>
    </recommendedName>
    <alternativeName>
        <fullName>Ankyrin repeat domain-containing protein 58</fullName>
    </alternativeName>
    <alternativeName>
        <fullName>Protein sosondowah homolog D</fullName>
    </alternativeName>
</protein>
<sequence>MAQLGGAANRAPTASLAPTSQSLRCAPQPRPSRADTGSLGRYWGKAAAAASREHPFPGTLMHSAAGSGRRRGALRELLGLQRAAPAGWLSEERAEELGGPSGPGSSRLCLEPREHAWILAAAEGRYEVLRELLEAEPELLLRGDPITGYSVLHWLAKHGRHEELILVHDFALRRGLRLDVSAPGSGGLTPLHLAALQGHDMVIKVLVGALGADATRRDHSGHRACHYLRPDAPWRLRELSGAEEWEMESGSGCTNLNNNSSGTTAWRAASAVGATAVETSRRVAASRTKAKDTAGSRVAQMHSLFRHLFPSFQDR</sequence>